<comment type="function">
    <text evidence="1">One of the early assembly proteins it binds 23S rRNA. One of the proteins that surrounds the polypeptide exit tunnel on the outside of the ribosome. Forms the main docking site for trigger factor binding to the ribosome.</text>
</comment>
<comment type="subunit">
    <text evidence="1">Part of the 50S ribosomal subunit. Contacts protein L29, and trigger factor when it is bound to the ribosome.</text>
</comment>
<comment type="similarity">
    <text evidence="1">Belongs to the universal ribosomal protein uL23 family.</text>
</comment>
<dbReference type="EMBL" id="CP000449">
    <property type="protein sequence ID" value="ABI66085.1"/>
    <property type="molecule type" value="Genomic_DNA"/>
</dbReference>
<dbReference type="RefSeq" id="WP_011643731.1">
    <property type="nucleotide sequence ID" value="NC_008347.1"/>
</dbReference>
<dbReference type="SMR" id="Q0ANQ2"/>
<dbReference type="STRING" id="394221.Mmar10_1793"/>
<dbReference type="KEGG" id="mmr:Mmar10_1793"/>
<dbReference type="eggNOG" id="COG0089">
    <property type="taxonomic scope" value="Bacteria"/>
</dbReference>
<dbReference type="HOGENOM" id="CLU_037562_3_1_5"/>
<dbReference type="OrthoDB" id="9793353at2"/>
<dbReference type="Proteomes" id="UP000001964">
    <property type="component" value="Chromosome"/>
</dbReference>
<dbReference type="GO" id="GO:1990904">
    <property type="term" value="C:ribonucleoprotein complex"/>
    <property type="evidence" value="ECO:0007669"/>
    <property type="project" value="UniProtKB-KW"/>
</dbReference>
<dbReference type="GO" id="GO:0005840">
    <property type="term" value="C:ribosome"/>
    <property type="evidence" value="ECO:0007669"/>
    <property type="project" value="UniProtKB-KW"/>
</dbReference>
<dbReference type="GO" id="GO:0019843">
    <property type="term" value="F:rRNA binding"/>
    <property type="evidence" value="ECO:0007669"/>
    <property type="project" value="UniProtKB-UniRule"/>
</dbReference>
<dbReference type="GO" id="GO:0003735">
    <property type="term" value="F:structural constituent of ribosome"/>
    <property type="evidence" value="ECO:0007669"/>
    <property type="project" value="InterPro"/>
</dbReference>
<dbReference type="GO" id="GO:0006412">
    <property type="term" value="P:translation"/>
    <property type="evidence" value="ECO:0007669"/>
    <property type="project" value="UniProtKB-UniRule"/>
</dbReference>
<dbReference type="FunFam" id="3.30.70.330:FF:000001">
    <property type="entry name" value="50S ribosomal protein L23"/>
    <property type="match status" value="1"/>
</dbReference>
<dbReference type="Gene3D" id="3.30.70.330">
    <property type="match status" value="1"/>
</dbReference>
<dbReference type="HAMAP" id="MF_01369_B">
    <property type="entry name" value="Ribosomal_uL23_B"/>
    <property type="match status" value="1"/>
</dbReference>
<dbReference type="InterPro" id="IPR012677">
    <property type="entry name" value="Nucleotide-bd_a/b_plait_sf"/>
</dbReference>
<dbReference type="InterPro" id="IPR013025">
    <property type="entry name" value="Ribosomal_uL23-like"/>
</dbReference>
<dbReference type="InterPro" id="IPR012678">
    <property type="entry name" value="Ribosomal_uL23/eL15/eS24_sf"/>
</dbReference>
<dbReference type="InterPro" id="IPR001014">
    <property type="entry name" value="Ribosomal_uL23_CS"/>
</dbReference>
<dbReference type="NCBIfam" id="NF004359">
    <property type="entry name" value="PRK05738.1-3"/>
    <property type="match status" value="1"/>
</dbReference>
<dbReference type="NCBIfam" id="NF004360">
    <property type="entry name" value="PRK05738.1-5"/>
    <property type="match status" value="1"/>
</dbReference>
<dbReference type="NCBIfam" id="NF004363">
    <property type="entry name" value="PRK05738.2-4"/>
    <property type="match status" value="1"/>
</dbReference>
<dbReference type="PANTHER" id="PTHR11620">
    <property type="entry name" value="60S RIBOSOMAL PROTEIN L23A"/>
    <property type="match status" value="1"/>
</dbReference>
<dbReference type="Pfam" id="PF00276">
    <property type="entry name" value="Ribosomal_L23"/>
    <property type="match status" value="1"/>
</dbReference>
<dbReference type="SUPFAM" id="SSF54189">
    <property type="entry name" value="Ribosomal proteins S24e, L23 and L15e"/>
    <property type="match status" value="1"/>
</dbReference>
<dbReference type="PROSITE" id="PS00050">
    <property type="entry name" value="RIBOSOMAL_L23"/>
    <property type="match status" value="1"/>
</dbReference>
<accession>Q0ANQ2</accession>
<keyword id="KW-1185">Reference proteome</keyword>
<keyword id="KW-0687">Ribonucleoprotein</keyword>
<keyword id="KW-0689">Ribosomal protein</keyword>
<keyword id="KW-0694">RNA-binding</keyword>
<keyword id="KW-0699">rRNA-binding</keyword>
<sequence>MSAAARHYDTILSPVITEKSTLLSEESKVVFFVPLSANKGEIAEAVEALFKVKVTAVNTIKVHGKTKRFRGIPGRRNDQKKAVVTLAEGHSIDVTTGL</sequence>
<organism>
    <name type="scientific">Maricaulis maris (strain MCS10)</name>
    <name type="common">Caulobacter maris</name>
    <dbReference type="NCBI Taxonomy" id="394221"/>
    <lineage>
        <taxon>Bacteria</taxon>
        <taxon>Pseudomonadati</taxon>
        <taxon>Pseudomonadota</taxon>
        <taxon>Alphaproteobacteria</taxon>
        <taxon>Maricaulales</taxon>
        <taxon>Maricaulaceae</taxon>
        <taxon>Maricaulis</taxon>
    </lineage>
</organism>
<protein>
    <recommendedName>
        <fullName evidence="1">Large ribosomal subunit protein uL23</fullName>
    </recommendedName>
    <alternativeName>
        <fullName evidence="2">50S ribosomal protein L23</fullName>
    </alternativeName>
</protein>
<feature type="chain" id="PRO_0000272770" description="Large ribosomal subunit protein uL23">
    <location>
        <begin position="1"/>
        <end position="98"/>
    </location>
</feature>
<reference key="1">
    <citation type="submission" date="2006-08" db="EMBL/GenBank/DDBJ databases">
        <title>Complete sequence of Maricaulis maris MCS10.</title>
        <authorList>
            <consortium name="US DOE Joint Genome Institute"/>
            <person name="Copeland A."/>
            <person name="Lucas S."/>
            <person name="Lapidus A."/>
            <person name="Barry K."/>
            <person name="Detter J.C."/>
            <person name="Glavina del Rio T."/>
            <person name="Hammon N."/>
            <person name="Israni S."/>
            <person name="Dalin E."/>
            <person name="Tice H."/>
            <person name="Pitluck S."/>
            <person name="Saunders E."/>
            <person name="Brettin T."/>
            <person name="Bruce D."/>
            <person name="Han C."/>
            <person name="Tapia R."/>
            <person name="Gilna P."/>
            <person name="Schmutz J."/>
            <person name="Larimer F."/>
            <person name="Land M."/>
            <person name="Hauser L."/>
            <person name="Kyrpides N."/>
            <person name="Mikhailova N."/>
            <person name="Viollier P."/>
            <person name="Stephens C."/>
            <person name="Richardson P."/>
        </authorList>
    </citation>
    <scope>NUCLEOTIDE SEQUENCE [LARGE SCALE GENOMIC DNA]</scope>
    <source>
        <strain>MCS10</strain>
    </source>
</reference>
<name>RL23_MARMM</name>
<evidence type="ECO:0000255" key="1">
    <source>
        <dbReference type="HAMAP-Rule" id="MF_01369"/>
    </source>
</evidence>
<evidence type="ECO:0000305" key="2"/>
<gene>
    <name evidence="1" type="primary">rplW</name>
    <name type="ordered locus">Mmar10_1793</name>
</gene>
<proteinExistence type="inferred from homology"/>